<organism>
    <name type="scientific">Cupriavidus taiwanensis (strain DSM 17343 / BCRC 17206 / CCUG 44338 / CIP 107171 / LMG 19424 / R1)</name>
    <name type="common">Ralstonia taiwanensis (strain LMG 19424)</name>
    <dbReference type="NCBI Taxonomy" id="977880"/>
    <lineage>
        <taxon>Bacteria</taxon>
        <taxon>Pseudomonadati</taxon>
        <taxon>Pseudomonadota</taxon>
        <taxon>Betaproteobacteria</taxon>
        <taxon>Burkholderiales</taxon>
        <taxon>Burkholderiaceae</taxon>
        <taxon>Cupriavidus</taxon>
    </lineage>
</organism>
<reference key="1">
    <citation type="journal article" date="2008" name="Genome Res.">
        <title>Genome sequence of the beta-rhizobium Cupriavidus taiwanensis and comparative genomics of rhizobia.</title>
        <authorList>
            <person name="Amadou C."/>
            <person name="Pascal G."/>
            <person name="Mangenot S."/>
            <person name="Glew M."/>
            <person name="Bontemps C."/>
            <person name="Capela D."/>
            <person name="Carrere S."/>
            <person name="Cruveiller S."/>
            <person name="Dossat C."/>
            <person name="Lajus A."/>
            <person name="Marchetti M."/>
            <person name="Poinsot V."/>
            <person name="Rouy Z."/>
            <person name="Servin B."/>
            <person name="Saad M."/>
            <person name="Schenowitz C."/>
            <person name="Barbe V."/>
            <person name="Batut J."/>
            <person name="Medigue C."/>
            <person name="Masson-Boivin C."/>
        </authorList>
    </citation>
    <scope>NUCLEOTIDE SEQUENCE [LARGE SCALE GENOMIC DNA]</scope>
    <source>
        <strain>DSM 17343 / BCRC 17206 / CCUG 44338 / CIP 107171 / LMG 19424 / R1</strain>
    </source>
</reference>
<keyword id="KW-0028">Amino-acid biosynthesis</keyword>
<keyword id="KW-0963">Cytoplasm</keyword>
<keyword id="KW-0368">Histidine biosynthesis</keyword>
<evidence type="ECO:0000255" key="1">
    <source>
        <dbReference type="HAMAP-Rule" id="MF_00125"/>
    </source>
</evidence>
<accession>B3R1J2</accession>
<feature type="chain" id="PRO_1000095456" description="ATP phosphoribosyltransferase regulatory subunit">
    <location>
        <begin position="1"/>
        <end position="383"/>
    </location>
</feature>
<dbReference type="EMBL" id="CU633749">
    <property type="protein sequence ID" value="CAQ69840.1"/>
    <property type="molecule type" value="Genomic_DNA"/>
</dbReference>
<dbReference type="RefSeq" id="WP_012353155.1">
    <property type="nucleotide sequence ID" value="NC_010528.1"/>
</dbReference>
<dbReference type="SMR" id="B3R1J2"/>
<dbReference type="GeneID" id="29761185"/>
<dbReference type="KEGG" id="cti:RALTA_A1899"/>
<dbReference type="eggNOG" id="COG3705">
    <property type="taxonomic scope" value="Bacteria"/>
</dbReference>
<dbReference type="HOGENOM" id="CLU_025113_0_1_4"/>
<dbReference type="BioCyc" id="CTAI977880:RALTA_RS09160-MONOMER"/>
<dbReference type="UniPathway" id="UPA00031">
    <property type="reaction ID" value="UER00006"/>
</dbReference>
<dbReference type="Proteomes" id="UP000001692">
    <property type="component" value="Chromosome 1"/>
</dbReference>
<dbReference type="GO" id="GO:0005737">
    <property type="term" value="C:cytoplasm"/>
    <property type="evidence" value="ECO:0007669"/>
    <property type="project" value="UniProtKB-SubCell"/>
</dbReference>
<dbReference type="GO" id="GO:0004821">
    <property type="term" value="F:histidine-tRNA ligase activity"/>
    <property type="evidence" value="ECO:0007669"/>
    <property type="project" value="TreeGrafter"/>
</dbReference>
<dbReference type="GO" id="GO:0006427">
    <property type="term" value="P:histidyl-tRNA aminoacylation"/>
    <property type="evidence" value="ECO:0007669"/>
    <property type="project" value="TreeGrafter"/>
</dbReference>
<dbReference type="GO" id="GO:0000105">
    <property type="term" value="P:L-histidine biosynthetic process"/>
    <property type="evidence" value="ECO:0007669"/>
    <property type="project" value="UniProtKB-UniRule"/>
</dbReference>
<dbReference type="CDD" id="cd00773">
    <property type="entry name" value="HisRS-like_core"/>
    <property type="match status" value="1"/>
</dbReference>
<dbReference type="Gene3D" id="3.30.930.10">
    <property type="entry name" value="Bira Bifunctional Protein, Domain 2"/>
    <property type="match status" value="1"/>
</dbReference>
<dbReference type="HAMAP" id="MF_00125">
    <property type="entry name" value="HisZ"/>
    <property type="match status" value="1"/>
</dbReference>
<dbReference type="InterPro" id="IPR045864">
    <property type="entry name" value="aa-tRNA-synth_II/BPL/LPL"/>
</dbReference>
<dbReference type="InterPro" id="IPR041715">
    <property type="entry name" value="HisRS-like_core"/>
</dbReference>
<dbReference type="InterPro" id="IPR004516">
    <property type="entry name" value="HisRS/HisZ"/>
</dbReference>
<dbReference type="InterPro" id="IPR004517">
    <property type="entry name" value="HisZ"/>
</dbReference>
<dbReference type="NCBIfam" id="TIGR00443">
    <property type="entry name" value="hisZ_biosyn_reg"/>
    <property type="match status" value="1"/>
</dbReference>
<dbReference type="NCBIfam" id="NF008935">
    <property type="entry name" value="PRK12292.1-1"/>
    <property type="match status" value="1"/>
</dbReference>
<dbReference type="NCBIfam" id="NF009086">
    <property type="entry name" value="PRK12421.1"/>
    <property type="match status" value="1"/>
</dbReference>
<dbReference type="PANTHER" id="PTHR43707:SF1">
    <property type="entry name" value="HISTIDINE--TRNA LIGASE, MITOCHONDRIAL-RELATED"/>
    <property type="match status" value="1"/>
</dbReference>
<dbReference type="PANTHER" id="PTHR43707">
    <property type="entry name" value="HISTIDYL-TRNA SYNTHETASE"/>
    <property type="match status" value="1"/>
</dbReference>
<dbReference type="Pfam" id="PF13393">
    <property type="entry name" value="tRNA-synt_His"/>
    <property type="match status" value="1"/>
</dbReference>
<dbReference type="SUPFAM" id="SSF55681">
    <property type="entry name" value="Class II aaRS and biotin synthetases"/>
    <property type="match status" value="1"/>
</dbReference>
<protein>
    <recommendedName>
        <fullName evidence="1">ATP phosphoribosyltransferase regulatory subunit</fullName>
    </recommendedName>
</protein>
<gene>
    <name evidence="1" type="primary">hisZ</name>
    <name type="ordered locus">RALTA_A1899</name>
</gene>
<comment type="function">
    <text evidence="1">Required for the first step of histidine biosynthesis. May allow the feedback regulation of ATP phosphoribosyltransferase activity by histidine.</text>
</comment>
<comment type="pathway">
    <text evidence="1">Amino-acid biosynthesis; L-histidine biosynthesis; L-histidine from 5-phospho-alpha-D-ribose 1-diphosphate: step 1/9.</text>
</comment>
<comment type="subunit">
    <text evidence="1">Heteromultimer composed of HisG and HisZ subunits.</text>
</comment>
<comment type="subcellular location">
    <subcellularLocation>
        <location evidence="1">Cytoplasm</location>
    </subcellularLocation>
</comment>
<comment type="miscellaneous">
    <text>This function is generally fulfilled by the C-terminal part of HisG, which is missing in some bacteria such as this one.</text>
</comment>
<comment type="similarity">
    <text evidence="1">Belongs to the class-II aminoacyl-tRNA synthetase family. HisZ subfamily.</text>
</comment>
<sequence>MSNHWLLPENIADVLPSEARKIEELRRRMLDLFRTYGYELVMPPMLEYLESLLTGTGHDLDLRTLKLVDQLSGRTMGLRADITPQVARIDAHLLNRPGVTRLCYAGNVLHARPAGFHATREPIQIGAEIYGHAGLEADVEIQELMLAALTAAGLSDIRIDLCHAGILEALLAGLPSIRKIEDALFAALETKDVPALRELTAGMPQTERDALLALPTLYGGVEVIERARATLPASPAIGRALDELAALAVQVRGASVNIDLSDLRGYHYHSGVMFAAYVAGLPNYVARGGRYDKVGEAFGRARPATGFSLDLREVAALSPVEVRALAIFAPWDADPALRAAIAGLRAGGEIVIQSLPGHTHELDEFNCDRQLVRKDAGWVVVPR</sequence>
<proteinExistence type="inferred from homology"/>
<name>HISZ_CUPTR</name>